<organism>
    <name type="scientific">Stenotrophomonas maltophilia (strain R551-3)</name>
    <dbReference type="NCBI Taxonomy" id="391008"/>
    <lineage>
        <taxon>Bacteria</taxon>
        <taxon>Pseudomonadati</taxon>
        <taxon>Pseudomonadota</taxon>
        <taxon>Gammaproteobacteria</taxon>
        <taxon>Lysobacterales</taxon>
        <taxon>Lysobacteraceae</taxon>
        <taxon>Stenotrophomonas</taxon>
        <taxon>Stenotrophomonas maltophilia group</taxon>
    </lineage>
</organism>
<sequence length="159" mass="17894">MNKNTQGKPSGKPVRRDGVDPVLRSRARRRAVQAIYAWQISGGNAQSLIAQFAHEQAREIADLAYFEALMHGVLDNRRDIDEALGPYLDRGIEEVDAIERAVLRLAGYELRYRLDVPYRVVINEAIESAKRFGSEHGHTYVNGVLDRAAVELRKVESGH</sequence>
<feature type="chain" id="PRO_1000092590" description="Transcription antitermination protein NusB">
    <location>
        <begin position="1"/>
        <end position="159"/>
    </location>
</feature>
<feature type="region of interest" description="Disordered" evidence="2">
    <location>
        <begin position="1"/>
        <end position="20"/>
    </location>
</feature>
<protein>
    <recommendedName>
        <fullName evidence="1">Transcription antitermination protein NusB</fullName>
    </recommendedName>
    <alternativeName>
        <fullName evidence="1">Antitermination factor NusB</fullName>
    </alternativeName>
</protein>
<keyword id="KW-0694">RNA-binding</keyword>
<keyword id="KW-0804">Transcription</keyword>
<keyword id="KW-0889">Transcription antitermination</keyword>
<keyword id="KW-0805">Transcription regulation</keyword>
<reference key="1">
    <citation type="submission" date="2008-06" db="EMBL/GenBank/DDBJ databases">
        <title>Complete sequence of Stenotrophomonas maltophilia R551-3.</title>
        <authorList>
            <consortium name="US DOE Joint Genome Institute"/>
            <person name="Lucas S."/>
            <person name="Copeland A."/>
            <person name="Lapidus A."/>
            <person name="Glavina del Rio T."/>
            <person name="Dalin E."/>
            <person name="Tice H."/>
            <person name="Pitluck S."/>
            <person name="Chain P."/>
            <person name="Malfatti S."/>
            <person name="Shin M."/>
            <person name="Vergez L."/>
            <person name="Lang D."/>
            <person name="Schmutz J."/>
            <person name="Larimer F."/>
            <person name="Land M."/>
            <person name="Hauser L."/>
            <person name="Kyrpides N."/>
            <person name="Mikhailova N."/>
            <person name="Taghavi S."/>
            <person name="Monchy S."/>
            <person name="Newman L."/>
            <person name="Vangronsveld J."/>
            <person name="van der Lelie D."/>
            <person name="Richardson P."/>
        </authorList>
    </citation>
    <scope>NUCLEOTIDE SEQUENCE [LARGE SCALE GENOMIC DNA]</scope>
    <source>
        <strain>R551-3</strain>
    </source>
</reference>
<gene>
    <name evidence="1" type="primary">nusB</name>
    <name type="ordered locus">Smal_0584</name>
</gene>
<accession>B4SJC1</accession>
<proteinExistence type="inferred from homology"/>
<comment type="function">
    <text evidence="1">Involved in transcription antitermination. Required for transcription of ribosomal RNA (rRNA) genes. Binds specifically to the boxA antiterminator sequence of the ribosomal RNA (rrn) operons.</text>
</comment>
<comment type="similarity">
    <text evidence="1">Belongs to the NusB family.</text>
</comment>
<evidence type="ECO:0000255" key="1">
    <source>
        <dbReference type="HAMAP-Rule" id="MF_00073"/>
    </source>
</evidence>
<evidence type="ECO:0000256" key="2">
    <source>
        <dbReference type="SAM" id="MobiDB-lite"/>
    </source>
</evidence>
<dbReference type="EMBL" id="CP001111">
    <property type="protein sequence ID" value="ACF50289.1"/>
    <property type="molecule type" value="Genomic_DNA"/>
</dbReference>
<dbReference type="RefSeq" id="WP_004143441.1">
    <property type="nucleotide sequence ID" value="NC_011071.1"/>
</dbReference>
<dbReference type="SMR" id="B4SJC1"/>
<dbReference type="STRING" id="391008.Smal_0584"/>
<dbReference type="KEGG" id="smt:Smal_0584"/>
<dbReference type="eggNOG" id="COG0781">
    <property type="taxonomic scope" value="Bacteria"/>
</dbReference>
<dbReference type="HOGENOM" id="CLU_087843_4_1_6"/>
<dbReference type="OrthoDB" id="9789556at2"/>
<dbReference type="Proteomes" id="UP000001867">
    <property type="component" value="Chromosome"/>
</dbReference>
<dbReference type="GO" id="GO:0005829">
    <property type="term" value="C:cytosol"/>
    <property type="evidence" value="ECO:0007669"/>
    <property type="project" value="TreeGrafter"/>
</dbReference>
<dbReference type="GO" id="GO:0003723">
    <property type="term" value="F:RNA binding"/>
    <property type="evidence" value="ECO:0007669"/>
    <property type="project" value="UniProtKB-UniRule"/>
</dbReference>
<dbReference type="GO" id="GO:0006353">
    <property type="term" value="P:DNA-templated transcription termination"/>
    <property type="evidence" value="ECO:0007669"/>
    <property type="project" value="UniProtKB-UniRule"/>
</dbReference>
<dbReference type="GO" id="GO:0031564">
    <property type="term" value="P:transcription antitermination"/>
    <property type="evidence" value="ECO:0007669"/>
    <property type="project" value="UniProtKB-KW"/>
</dbReference>
<dbReference type="CDD" id="cd00619">
    <property type="entry name" value="Terminator_NusB"/>
    <property type="match status" value="1"/>
</dbReference>
<dbReference type="FunFam" id="1.10.940.10:FF:000001">
    <property type="entry name" value="Transcription antitermination factor NusB"/>
    <property type="match status" value="1"/>
</dbReference>
<dbReference type="Gene3D" id="1.10.940.10">
    <property type="entry name" value="NusB-like"/>
    <property type="match status" value="1"/>
</dbReference>
<dbReference type="HAMAP" id="MF_00073">
    <property type="entry name" value="NusB"/>
    <property type="match status" value="1"/>
</dbReference>
<dbReference type="InterPro" id="IPR035926">
    <property type="entry name" value="NusB-like_sf"/>
</dbReference>
<dbReference type="InterPro" id="IPR011605">
    <property type="entry name" value="NusB_fam"/>
</dbReference>
<dbReference type="InterPro" id="IPR006027">
    <property type="entry name" value="NusB_RsmB_TIM44"/>
</dbReference>
<dbReference type="NCBIfam" id="TIGR01951">
    <property type="entry name" value="nusB"/>
    <property type="match status" value="1"/>
</dbReference>
<dbReference type="PANTHER" id="PTHR11078:SF3">
    <property type="entry name" value="ANTITERMINATION NUSB DOMAIN-CONTAINING PROTEIN"/>
    <property type="match status" value="1"/>
</dbReference>
<dbReference type="PANTHER" id="PTHR11078">
    <property type="entry name" value="N UTILIZATION SUBSTANCE PROTEIN B-RELATED"/>
    <property type="match status" value="1"/>
</dbReference>
<dbReference type="Pfam" id="PF01029">
    <property type="entry name" value="NusB"/>
    <property type="match status" value="1"/>
</dbReference>
<dbReference type="SUPFAM" id="SSF48013">
    <property type="entry name" value="NusB-like"/>
    <property type="match status" value="1"/>
</dbReference>
<name>NUSB_STRM5</name>